<name>UTS2_RAT</name>
<organism>
    <name type="scientific">Rattus norvegicus</name>
    <name type="common">Rat</name>
    <dbReference type="NCBI Taxonomy" id="10116"/>
    <lineage>
        <taxon>Eukaryota</taxon>
        <taxon>Metazoa</taxon>
        <taxon>Chordata</taxon>
        <taxon>Craniata</taxon>
        <taxon>Vertebrata</taxon>
        <taxon>Euteleostomi</taxon>
        <taxon>Mammalia</taxon>
        <taxon>Eutheria</taxon>
        <taxon>Euarchontoglires</taxon>
        <taxon>Glires</taxon>
        <taxon>Rodentia</taxon>
        <taxon>Myomorpha</taxon>
        <taxon>Muroidea</taxon>
        <taxon>Muridae</taxon>
        <taxon>Murinae</taxon>
        <taxon>Rattus</taxon>
    </lineage>
</organism>
<sequence>MDRVPFCCLLFVGLLNPLLSFPVTDTGEMSLQLPVLEENALRALEELERTALLQTLRQTVGTEAEGSLGQADPSAETPTPRGSLRKALTGQDSNTVLSRLLARTRKQRKQHGTAPECFWKYCI</sequence>
<reference key="1">
    <citation type="journal article" date="1999" name="FEBS Lett.">
        <title>Cloning, sequence analysis and tissue distribution of the mouse and rat urotensin II precursors.</title>
        <authorList>
            <person name="Coulouarn Y."/>
            <person name="Jegou S."/>
            <person name="Tostivint H."/>
            <person name="Vaudry H."/>
            <person name="Lihrmann I."/>
        </authorList>
    </citation>
    <scope>NUCLEOTIDE SEQUENCE [MRNA]</scope>
    <source>
        <tissue>Spinal cord</tissue>
    </source>
</reference>
<dbReference type="EMBL" id="AF172174">
    <property type="protein sequence ID" value="AAD55766.1"/>
    <property type="molecule type" value="mRNA"/>
</dbReference>
<dbReference type="RefSeq" id="NP_001416473.1">
    <property type="nucleotide sequence ID" value="NM_001429544.1"/>
</dbReference>
<dbReference type="RefSeq" id="NP_062033.1">
    <property type="nucleotide sequence ID" value="NM_019160.3"/>
</dbReference>
<dbReference type="FunCoup" id="Q9QZQ4">
    <property type="interactions" value="1"/>
</dbReference>
<dbReference type="STRING" id="10116.ENSRNOP00000024798"/>
<dbReference type="BindingDB" id="Q9QZQ4"/>
<dbReference type="GlyGen" id="Q9QZQ4">
    <property type="glycosylation" value="1 site"/>
</dbReference>
<dbReference type="PaxDb" id="10116-ENSRNOP00000024798"/>
<dbReference type="Ensembl" id="ENSRNOT00000024798.5">
    <property type="protein sequence ID" value="ENSRNOP00000024798.3"/>
    <property type="gene ID" value="ENSRNOG00000018393.5"/>
</dbReference>
<dbReference type="GeneID" id="29180"/>
<dbReference type="KEGG" id="rno:29180"/>
<dbReference type="UCSC" id="RGD:3930">
    <property type="organism name" value="rat"/>
</dbReference>
<dbReference type="AGR" id="RGD:3930"/>
<dbReference type="CTD" id="10911"/>
<dbReference type="RGD" id="3930">
    <property type="gene designation" value="Uts2"/>
</dbReference>
<dbReference type="eggNOG" id="ENOG502SCRX">
    <property type="taxonomic scope" value="Eukaryota"/>
</dbReference>
<dbReference type="GeneTree" id="ENSGT00510000049583"/>
<dbReference type="HOGENOM" id="CLU_156959_0_0_1"/>
<dbReference type="InParanoid" id="Q9QZQ4"/>
<dbReference type="OMA" id="ETFYGNH"/>
<dbReference type="OrthoDB" id="8894951at2759"/>
<dbReference type="PhylomeDB" id="Q9QZQ4"/>
<dbReference type="TreeFam" id="TF330799"/>
<dbReference type="Reactome" id="R-RNO-375276">
    <property type="pathway name" value="Peptide ligand-binding receptors"/>
</dbReference>
<dbReference type="Reactome" id="R-RNO-416476">
    <property type="pathway name" value="G alpha (q) signalling events"/>
</dbReference>
<dbReference type="PRO" id="PR:Q9QZQ4"/>
<dbReference type="Proteomes" id="UP000002494">
    <property type="component" value="Chromosome 5"/>
</dbReference>
<dbReference type="Bgee" id="ENSRNOG00000018393">
    <property type="expression patterns" value="Expressed in duodenum and 5 other cell types or tissues"/>
</dbReference>
<dbReference type="GO" id="GO:0005615">
    <property type="term" value="C:extracellular space"/>
    <property type="evidence" value="ECO:0000314"/>
    <property type="project" value="RGD"/>
</dbReference>
<dbReference type="GO" id="GO:0005179">
    <property type="term" value="F:hormone activity"/>
    <property type="evidence" value="ECO:0007669"/>
    <property type="project" value="UniProtKB-KW"/>
</dbReference>
<dbReference type="GO" id="GO:0097746">
    <property type="term" value="P:blood vessel diameter maintenance"/>
    <property type="evidence" value="ECO:0000314"/>
    <property type="project" value="RGD"/>
</dbReference>
<dbReference type="GO" id="GO:0045776">
    <property type="term" value="P:negative regulation of blood pressure"/>
    <property type="evidence" value="ECO:0000314"/>
    <property type="project" value="RGD"/>
</dbReference>
<dbReference type="GO" id="GO:0003105">
    <property type="term" value="P:negative regulation of glomerular filtration"/>
    <property type="evidence" value="ECO:0000314"/>
    <property type="project" value="RGD"/>
</dbReference>
<dbReference type="GO" id="GO:0010459">
    <property type="term" value="P:negative regulation of heart rate"/>
    <property type="evidence" value="ECO:0000314"/>
    <property type="project" value="RGD"/>
</dbReference>
<dbReference type="GO" id="GO:0046676">
    <property type="term" value="P:negative regulation of insulin secretion"/>
    <property type="evidence" value="ECO:0000315"/>
    <property type="project" value="RGD"/>
</dbReference>
<dbReference type="GO" id="GO:0035811">
    <property type="term" value="P:negative regulation of urine volume"/>
    <property type="evidence" value="ECO:0000314"/>
    <property type="project" value="RGD"/>
</dbReference>
<dbReference type="GO" id="GO:0045766">
    <property type="term" value="P:positive regulation of angiogenesis"/>
    <property type="evidence" value="ECO:0000314"/>
    <property type="project" value="RGD"/>
</dbReference>
<dbReference type="GO" id="GO:0045777">
    <property type="term" value="P:positive regulation of blood pressure"/>
    <property type="evidence" value="ECO:0000314"/>
    <property type="project" value="RGD"/>
</dbReference>
<dbReference type="GO" id="GO:0045597">
    <property type="term" value="P:positive regulation of cell differentiation"/>
    <property type="evidence" value="ECO:0000314"/>
    <property type="project" value="RGD"/>
</dbReference>
<dbReference type="GO" id="GO:0046005">
    <property type="term" value="P:positive regulation of circadian sleep/wake cycle, REM sleep"/>
    <property type="evidence" value="ECO:0000314"/>
    <property type="project" value="RGD"/>
</dbReference>
<dbReference type="GO" id="GO:0010841">
    <property type="term" value="P:positive regulation of circadian sleep/wake cycle, wakefulness"/>
    <property type="evidence" value="ECO:0000314"/>
    <property type="project" value="RGD"/>
</dbReference>
<dbReference type="GO" id="GO:0032967">
    <property type="term" value="P:positive regulation of collagen biosynthetic process"/>
    <property type="evidence" value="ECO:0000314"/>
    <property type="project" value="RGD"/>
</dbReference>
<dbReference type="GO" id="GO:0007204">
    <property type="term" value="P:positive regulation of cytosolic calcium ion concentration"/>
    <property type="evidence" value="ECO:0000314"/>
    <property type="project" value="RGD"/>
</dbReference>
<dbReference type="GO" id="GO:0010763">
    <property type="term" value="P:positive regulation of fibroblast migration"/>
    <property type="evidence" value="ECO:0000314"/>
    <property type="project" value="RGD"/>
</dbReference>
<dbReference type="GO" id="GO:0048146">
    <property type="term" value="P:positive regulation of fibroblast proliferation"/>
    <property type="evidence" value="ECO:0000314"/>
    <property type="project" value="RGD"/>
</dbReference>
<dbReference type="GO" id="GO:0010460">
    <property type="term" value="P:positive regulation of heart rate"/>
    <property type="evidence" value="ECO:0000314"/>
    <property type="project" value="RGD"/>
</dbReference>
<dbReference type="GO" id="GO:0032224">
    <property type="term" value="P:positive regulation of synaptic transmission, cholinergic"/>
    <property type="evidence" value="ECO:0000314"/>
    <property type="project" value="RGD"/>
</dbReference>
<dbReference type="GO" id="GO:0008217">
    <property type="term" value="P:regulation of blood pressure"/>
    <property type="evidence" value="ECO:0000318"/>
    <property type="project" value="GO_Central"/>
</dbReference>
<dbReference type="GO" id="GO:0001666">
    <property type="term" value="P:response to hypoxia"/>
    <property type="evidence" value="ECO:0000270"/>
    <property type="project" value="RGD"/>
</dbReference>
<dbReference type="GO" id="GO:0033574">
    <property type="term" value="P:response to testosterone"/>
    <property type="evidence" value="ECO:0000270"/>
    <property type="project" value="RGD"/>
</dbReference>
<dbReference type="GO" id="GO:0009410">
    <property type="term" value="P:response to xenobiotic stimulus"/>
    <property type="evidence" value="ECO:0000270"/>
    <property type="project" value="RGD"/>
</dbReference>
<dbReference type="InterPro" id="IPR001483">
    <property type="entry name" value="Urotensin_II"/>
</dbReference>
<dbReference type="PANTHER" id="PTHR14447">
    <property type="entry name" value="UROTENSIN 2"/>
    <property type="match status" value="1"/>
</dbReference>
<dbReference type="PANTHER" id="PTHR14447:SF0">
    <property type="entry name" value="UROTENSIN-2"/>
    <property type="match status" value="1"/>
</dbReference>
<dbReference type="Pfam" id="PF02083">
    <property type="entry name" value="Urotensin_II"/>
    <property type="match status" value="1"/>
</dbReference>
<dbReference type="PROSITE" id="PS00984">
    <property type="entry name" value="UROTENSIN_II"/>
    <property type="match status" value="1"/>
</dbReference>
<proteinExistence type="evidence at transcript level"/>
<protein>
    <recommendedName>
        <fullName>Urotensin-2</fullName>
    </recommendedName>
    <alternativeName>
        <fullName>Urotensin II</fullName>
        <shortName>U-II</shortName>
        <shortName>UII</shortName>
    </alternativeName>
</protein>
<gene>
    <name type="primary">Uts2</name>
</gene>
<keyword id="KW-0165">Cleavage on pair of basic residues</keyword>
<keyword id="KW-1015">Disulfide bond</keyword>
<keyword id="KW-0372">Hormone</keyword>
<keyword id="KW-1185">Reference proteome</keyword>
<keyword id="KW-0964">Secreted</keyword>
<keyword id="KW-0732">Signal</keyword>
<feature type="signal peptide" evidence="2">
    <location>
        <begin position="1"/>
        <end position="20"/>
    </location>
</feature>
<feature type="propeptide" id="PRO_0000036355" evidence="2">
    <location>
        <begin position="21"/>
        <end position="104"/>
    </location>
</feature>
<feature type="peptide" id="PRO_0000036356" description="Urotensin-2">
    <location>
        <begin position="110"/>
        <end position="123"/>
    </location>
</feature>
<feature type="region of interest" description="Disordered" evidence="3">
    <location>
        <begin position="63"/>
        <end position="91"/>
    </location>
</feature>
<feature type="disulfide bond" evidence="1">
    <location>
        <begin position="117"/>
        <end position="122"/>
    </location>
</feature>
<comment type="function">
    <text evidence="1">Highly potent vasoconstrictor.</text>
</comment>
<comment type="subcellular location">
    <subcellularLocation>
        <location>Secreted</location>
    </subcellularLocation>
</comment>
<comment type="tissue specificity">
    <text>Brain specific.</text>
</comment>
<comment type="similarity">
    <text evidence="4">Belongs to the urotensin-2 family.</text>
</comment>
<evidence type="ECO:0000250" key="1"/>
<evidence type="ECO:0000255" key="2"/>
<evidence type="ECO:0000256" key="3">
    <source>
        <dbReference type="SAM" id="MobiDB-lite"/>
    </source>
</evidence>
<evidence type="ECO:0000305" key="4"/>
<accession>Q9QZQ4</accession>